<comment type="function">
    <text evidence="1">Catalyzes the 1,3-allylic rearrangement of the homoallylic substrate isopentenyl (IPP) to its highly electrophilic allylic isomer, dimethylallyl diphosphate (DMAPP).</text>
</comment>
<comment type="catalytic activity">
    <reaction evidence="1">
        <text>isopentenyl diphosphate = dimethylallyl diphosphate</text>
        <dbReference type="Rhea" id="RHEA:23284"/>
        <dbReference type="ChEBI" id="CHEBI:57623"/>
        <dbReference type="ChEBI" id="CHEBI:128769"/>
        <dbReference type="EC" id="5.3.3.2"/>
    </reaction>
</comment>
<comment type="cofactor">
    <cofactor evidence="1">
        <name>Mg(2+)</name>
        <dbReference type="ChEBI" id="CHEBI:18420"/>
    </cofactor>
    <text evidence="1">Binds 1 Mg(2+) ion per subunit. The magnesium ion binds only when substrate is bound.</text>
</comment>
<comment type="cofactor">
    <cofactor evidence="1">
        <name>Mn(2+)</name>
        <dbReference type="ChEBI" id="CHEBI:29035"/>
    </cofactor>
    <text evidence="1">Binds 1 Mn(2+) ion per subunit.</text>
</comment>
<comment type="pathway">
    <text evidence="1">Isoprenoid biosynthesis; dimethylallyl diphosphate biosynthesis; dimethylallyl diphosphate from isopentenyl diphosphate: step 1/1.</text>
</comment>
<comment type="subunit">
    <text evidence="1">Homodimer.</text>
</comment>
<comment type="subcellular location">
    <subcellularLocation>
        <location evidence="1">Cytoplasm</location>
    </subcellularLocation>
</comment>
<comment type="similarity">
    <text evidence="1">Belongs to the IPP isomerase type 1 family.</text>
</comment>
<accession>B7LYF3</accession>
<sequence length="182" mass="20373">MQTEHVILLNAQGVPTGTLEKYAAHTADTRLHLAFSSWLFNAKGQLLVTRRALSKKAWPGVWTNSVCGHPQLGESNEDAVIRRCRYELGVEITPPESIYPDFRYRATDPNGIVENEVCPVFAARTTSALQINDDEVMDYQWCDLADVLHGIDATPWAFSPWMVMQAANSEARKLLSAFAQHN</sequence>
<name>IDI_ECO8A</name>
<gene>
    <name evidence="1" type="primary">idi</name>
    <name type="ordered locus">ECIAI1_3008</name>
</gene>
<keyword id="KW-0963">Cytoplasm</keyword>
<keyword id="KW-0413">Isomerase</keyword>
<keyword id="KW-0414">Isoprene biosynthesis</keyword>
<keyword id="KW-0460">Magnesium</keyword>
<keyword id="KW-0464">Manganese</keyword>
<keyword id="KW-0479">Metal-binding</keyword>
<protein>
    <recommendedName>
        <fullName evidence="1">Isopentenyl-diphosphate Delta-isomerase</fullName>
        <shortName evidence="1">IPP isomerase</shortName>
        <ecNumber evidence="1">5.3.3.2</ecNumber>
    </recommendedName>
    <alternativeName>
        <fullName evidence="1">IPP:DMAPP isomerase</fullName>
    </alternativeName>
    <alternativeName>
        <fullName evidence="1">Isopentenyl pyrophosphate isomerase</fullName>
    </alternativeName>
</protein>
<reference key="1">
    <citation type="journal article" date="2009" name="PLoS Genet.">
        <title>Organised genome dynamics in the Escherichia coli species results in highly diverse adaptive paths.</title>
        <authorList>
            <person name="Touchon M."/>
            <person name="Hoede C."/>
            <person name="Tenaillon O."/>
            <person name="Barbe V."/>
            <person name="Baeriswyl S."/>
            <person name="Bidet P."/>
            <person name="Bingen E."/>
            <person name="Bonacorsi S."/>
            <person name="Bouchier C."/>
            <person name="Bouvet O."/>
            <person name="Calteau A."/>
            <person name="Chiapello H."/>
            <person name="Clermont O."/>
            <person name="Cruveiller S."/>
            <person name="Danchin A."/>
            <person name="Diard M."/>
            <person name="Dossat C."/>
            <person name="Karoui M.E."/>
            <person name="Frapy E."/>
            <person name="Garry L."/>
            <person name="Ghigo J.M."/>
            <person name="Gilles A.M."/>
            <person name="Johnson J."/>
            <person name="Le Bouguenec C."/>
            <person name="Lescat M."/>
            <person name="Mangenot S."/>
            <person name="Martinez-Jehanne V."/>
            <person name="Matic I."/>
            <person name="Nassif X."/>
            <person name="Oztas S."/>
            <person name="Petit M.A."/>
            <person name="Pichon C."/>
            <person name="Rouy Z."/>
            <person name="Ruf C.S."/>
            <person name="Schneider D."/>
            <person name="Tourret J."/>
            <person name="Vacherie B."/>
            <person name="Vallenet D."/>
            <person name="Medigue C."/>
            <person name="Rocha E.P.C."/>
            <person name="Denamur E."/>
        </authorList>
    </citation>
    <scope>NUCLEOTIDE SEQUENCE [LARGE SCALE GENOMIC DNA]</scope>
    <source>
        <strain>IAI1</strain>
    </source>
</reference>
<evidence type="ECO:0000255" key="1">
    <source>
        <dbReference type="HAMAP-Rule" id="MF_00202"/>
    </source>
</evidence>
<organism>
    <name type="scientific">Escherichia coli O8 (strain IAI1)</name>
    <dbReference type="NCBI Taxonomy" id="585034"/>
    <lineage>
        <taxon>Bacteria</taxon>
        <taxon>Pseudomonadati</taxon>
        <taxon>Pseudomonadota</taxon>
        <taxon>Gammaproteobacteria</taxon>
        <taxon>Enterobacterales</taxon>
        <taxon>Enterobacteriaceae</taxon>
        <taxon>Escherichia</taxon>
    </lineage>
</organism>
<proteinExistence type="inferred from homology"/>
<feature type="chain" id="PRO_1000118725" description="Isopentenyl-diphosphate Delta-isomerase">
    <location>
        <begin position="1"/>
        <end position="182"/>
    </location>
</feature>
<feature type="domain" description="Nudix hydrolase">
    <location>
        <begin position="30"/>
        <end position="164"/>
    </location>
</feature>
<feature type="active site" evidence="1">
    <location>
        <position position="67"/>
    </location>
</feature>
<feature type="active site" evidence="1">
    <location>
        <position position="116"/>
    </location>
</feature>
<feature type="binding site" evidence="1">
    <location>
        <position position="25"/>
    </location>
    <ligand>
        <name>Mn(2+)</name>
        <dbReference type="ChEBI" id="CHEBI:29035"/>
    </ligand>
</feature>
<feature type="binding site" evidence="1">
    <location>
        <position position="32"/>
    </location>
    <ligand>
        <name>Mn(2+)</name>
        <dbReference type="ChEBI" id="CHEBI:29035"/>
    </ligand>
</feature>
<feature type="binding site" evidence="1">
    <location>
        <position position="69"/>
    </location>
    <ligand>
        <name>Mn(2+)</name>
        <dbReference type="ChEBI" id="CHEBI:29035"/>
    </ligand>
</feature>
<feature type="binding site" evidence="1">
    <location>
        <position position="87"/>
    </location>
    <ligand>
        <name>Mg(2+)</name>
        <dbReference type="ChEBI" id="CHEBI:18420"/>
    </ligand>
</feature>
<feature type="binding site" evidence="1">
    <location>
        <position position="114"/>
    </location>
    <ligand>
        <name>Mn(2+)</name>
        <dbReference type="ChEBI" id="CHEBI:29035"/>
    </ligand>
</feature>
<feature type="binding site" evidence="1">
    <location>
        <position position="116"/>
    </location>
    <ligand>
        <name>Mn(2+)</name>
        <dbReference type="ChEBI" id="CHEBI:29035"/>
    </ligand>
</feature>
<dbReference type="EC" id="5.3.3.2" evidence="1"/>
<dbReference type="EMBL" id="CU928160">
    <property type="protein sequence ID" value="CAQ99823.1"/>
    <property type="molecule type" value="Genomic_DNA"/>
</dbReference>
<dbReference type="RefSeq" id="WP_001192814.1">
    <property type="nucleotide sequence ID" value="NC_011741.1"/>
</dbReference>
<dbReference type="SMR" id="B7LYF3"/>
<dbReference type="GeneID" id="93779113"/>
<dbReference type="KEGG" id="ecr:ECIAI1_3008"/>
<dbReference type="HOGENOM" id="CLU_060552_2_0_6"/>
<dbReference type="UniPathway" id="UPA00059">
    <property type="reaction ID" value="UER00104"/>
</dbReference>
<dbReference type="GO" id="GO:0005737">
    <property type="term" value="C:cytoplasm"/>
    <property type="evidence" value="ECO:0007669"/>
    <property type="project" value="UniProtKB-SubCell"/>
</dbReference>
<dbReference type="GO" id="GO:0004452">
    <property type="term" value="F:isopentenyl-diphosphate delta-isomerase activity"/>
    <property type="evidence" value="ECO:0007669"/>
    <property type="project" value="UniProtKB-UniRule"/>
</dbReference>
<dbReference type="GO" id="GO:0046872">
    <property type="term" value="F:metal ion binding"/>
    <property type="evidence" value="ECO:0007669"/>
    <property type="project" value="UniProtKB-KW"/>
</dbReference>
<dbReference type="GO" id="GO:0050992">
    <property type="term" value="P:dimethylallyl diphosphate biosynthetic process"/>
    <property type="evidence" value="ECO:0007669"/>
    <property type="project" value="UniProtKB-UniRule"/>
</dbReference>
<dbReference type="GO" id="GO:0008299">
    <property type="term" value="P:isoprenoid biosynthetic process"/>
    <property type="evidence" value="ECO:0007669"/>
    <property type="project" value="UniProtKB-KW"/>
</dbReference>
<dbReference type="CDD" id="cd02885">
    <property type="entry name" value="NUDIX_IPP_Isomerase"/>
    <property type="match status" value="1"/>
</dbReference>
<dbReference type="FunFam" id="3.90.79.10:FF:000009">
    <property type="entry name" value="Isopentenyl-diphosphate Delta-isomerase"/>
    <property type="match status" value="1"/>
</dbReference>
<dbReference type="Gene3D" id="3.90.79.10">
    <property type="entry name" value="Nucleoside Triphosphate Pyrophosphohydrolase"/>
    <property type="match status" value="1"/>
</dbReference>
<dbReference type="HAMAP" id="MF_00202">
    <property type="entry name" value="Idi"/>
    <property type="match status" value="1"/>
</dbReference>
<dbReference type="InterPro" id="IPR056375">
    <property type="entry name" value="Idi_bact"/>
</dbReference>
<dbReference type="InterPro" id="IPR011876">
    <property type="entry name" value="IsopentenylPP_isomerase_typ1"/>
</dbReference>
<dbReference type="InterPro" id="IPR015797">
    <property type="entry name" value="NUDIX_hydrolase-like_dom_sf"/>
</dbReference>
<dbReference type="InterPro" id="IPR000086">
    <property type="entry name" value="NUDIX_hydrolase_dom"/>
</dbReference>
<dbReference type="NCBIfam" id="TIGR02150">
    <property type="entry name" value="IPP_isom_1"/>
    <property type="match status" value="1"/>
</dbReference>
<dbReference type="NCBIfam" id="NF002995">
    <property type="entry name" value="PRK03759.1"/>
    <property type="match status" value="1"/>
</dbReference>
<dbReference type="PANTHER" id="PTHR10885">
    <property type="entry name" value="ISOPENTENYL-DIPHOSPHATE DELTA-ISOMERASE"/>
    <property type="match status" value="1"/>
</dbReference>
<dbReference type="PANTHER" id="PTHR10885:SF0">
    <property type="entry name" value="ISOPENTENYL-DIPHOSPHATE DELTA-ISOMERASE"/>
    <property type="match status" value="1"/>
</dbReference>
<dbReference type="Pfam" id="PF00293">
    <property type="entry name" value="NUDIX"/>
    <property type="match status" value="1"/>
</dbReference>
<dbReference type="PIRSF" id="PIRSF018427">
    <property type="entry name" value="Isopntndiph_ism"/>
    <property type="match status" value="1"/>
</dbReference>
<dbReference type="SUPFAM" id="SSF55811">
    <property type="entry name" value="Nudix"/>
    <property type="match status" value="1"/>
</dbReference>
<dbReference type="PROSITE" id="PS51462">
    <property type="entry name" value="NUDIX"/>
    <property type="match status" value="1"/>
</dbReference>